<gene>
    <name type="primary">INS</name>
</gene>
<proteinExistence type="evidence at protein level"/>
<comment type="function">
    <text>Insulin decreases blood glucose concentration. It increases cell permeability to monosaccharides, amino acids and fatty acids. It accelerates glycolysis, the pentose phosphate cycle, and glycogen synthesis in liver.</text>
</comment>
<comment type="subunit">
    <text>Heterodimer of a B chain and an A chain linked by two disulfide bonds.</text>
</comment>
<comment type="subcellular location">
    <subcellularLocation>
        <location>Secreted</location>
    </subcellularLocation>
</comment>
<comment type="similarity">
    <text evidence="2">Belongs to the insulin family.</text>
</comment>
<organism>
    <name type="scientific">Acomys cahirinus</name>
    <name type="common">Cairo spiny mouse</name>
    <dbReference type="NCBI Taxonomy" id="10068"/>
    <lineage>
        <taxon>Eukaryota</taxon>
        <taxon>Metazoa</taxon>
        <taxon>Chordata</taxon>
        <taxon>Craniata</taxon>
        <taxon>Vertebrata</taxon>
        <taxon>Euteleostomi</taxon>
        <taxon>Mammalia</taxon>
        <taxon>Eutheria</taxon>
        <taxon>Euarchontoglires</taxon>
        <taxon>Glires</taxon>
        <taxon>Rodentia</taxon>
        <taxon>Myomorpha</taxon>
        <taxon>Muroidea</taxon>
        <taxon>Muridae</taxon>
        <taxon>Deomyinae</taxon>
        <taxon>Acomys</taxon>
    </lineage>
</organism>
<keyword id="KW-0119">Carbohydrate metabolism</keyword>
<keyword id="KW-0903">Direct protein sequencing</keyword>
<keyword id="KW-1015">Disulfide bond</keyword>
<keyword id="KW-0313">Glucose metabolism</keyword>
<keyword id="KW-0372">Hormone</keyword>
<keyword id="KW-0964">Secreted</keyword>
<dbReference type="PIR" id="A01591">
    <property type="entry name" value="INMSSP"/>
</dbReference>
<dbReference type="GO" id="GO:0005615">
    <property type="term" value="C:extracellular space"/>
    <property type="evidence" value="ECO:0007669"/>
    <property type="project" value="TreeGrafter"/>
</dbReference>
<dbReference type="GO" id="GO:0005179">
    <property type="term" value="F:hormone activity"/>
    <property type="evidence" value="ECO:0007669"/>
    <property type="project" value="UniProtKB-KW"/>
</dbReference>
<dbReference type="GO" id="GO:1901701">
    <property type="term" value="P:cellular response to oxygen-containing compound"/>
    <property type="evidence" value="ECO:0007669"/>
    <property type="project" value="UniProtKB-ARBA"/>
</dbReference>
<dbReference type="GO" id="GO:0042593">
    <property type="term" value="P:glucose homeostasis"/>
    <property type="evidence" value="ECO:0007669"/>
    <property type="project" value="TreeGrafter"/>
</dbReference>
<dbReference type="GO" id="GO:0006006">
    <property type="term" value="P:glucose metabolic process"/>
    <property type="evidence" value="ECO:0007669"/>
    <property type="project" value="UniProtKB-KW"/>
</dbReference>
<dbReference type="GO" id="GO:0050714">
    <property type="term" value="P:positive regulation of protein secretion"/>
    <property type="evidence" value="ECO:0007669"/>
    <property type="project" value="TreeGrafter"/>
</dbReference>
<dbReference type="CDD" id="cd04367">
    <property type="entry name" value="IlGF_insulin_like"/>
    <property type="match status" value="1"/>
</dbReference>
<dbReference type="Gene3D" id="1.10.100.10">
    <property type="entry name" value="Insulin-like"/>
    <property type="match status" value="2"/>
</dbReference>
<dbReference type="InterPro" id="IPR004825">
    <property type="entry name" value="Insulin"/>
</dbReference>
<dbReference type="InterPro" id="IPR016179">
    <property type="entry name" value="Insulin-like"/>
</dbReference>
<dbReference type="InterPro" id="IPR036438">
    <property type="entry name" value="Insulin-like_sf"/>
</dbReference>
<dbReference type="InterPro" id="IPR022353">
    <property type="entry name" value="Insulin_CS"/>
</dbReference>
<dbReference type="InterPro" id="IPR022352">
    <property type="entry name" value="Insulin_family"/>
</dbReference>
<dbReference type="PANTHER" id="PTHR11454:SF9">
    <property type="entry name" value="INSULIN"/>
    <property type="match status" value="1"/>
</dbReference>
<dbReference type="PANTHER" id="PTHR11454">
    <property type="entry name" value="INSULIN/INSULIN GROWTH FACTOR"/>
    <property type="match status" value="1"/>
</dbReference>
<dbReference type="Pfam" id="PF00049">
    <property type="entry name" value="Insulin"/>
    <property type="match status" value="1"/>
</dbReference>
<dbReference type="PRINTS" id="PR00277">
    <property type="entry name" value="INSULIN"/>
</dbReference>
<dbReference type="PRINTS" id="PR00276">
    <property type="entry name" value="INSULINFAMLY"/>
</dbReference>
<dbReference type="SMART" id="SM00078">
    <property type="entry name" value="IlGF"/>
    <property type="match status" value="1"/>
</dbReference>
<dbReference type="SUPFAM" id="SSF56994">
    <property type="entry name" value="Insulin-like"/>
    <property type="match status" value="1"/>
</dbReference>
<dbReference type="PROSITE" id="PS00262">
    <property type="entry name" value="INSULIN"/>
    <property type="match status" value="1"/>
</dbReference>
<sequence length="51" mass="5768">FVBQHLCGSHLVEALYLVCGERGFFYTPKSGIVDQCCTSICSLYQLENYCN</sequence>
<accession>P01324</accession>
<feature type="peptide" id="PRO_0000015740" description="Insulin B chain">
    <location>
        <begin position="1"/>
        <end position="30"/>
    </location>
</feature>
<feature type="peptide" id="PRO_0000015741" description="Insulin A chain">
    <location>
        <begin position="31"/>
        <end position="51"/>
    </location>
</feature>
<feature type="disulfide bond" description="Interchain (between B and A chains)" evidence="1">
    <location>
        <begin position="7"/>
        <end position="37"/>
    </location>
</feature>
<feature type="disulfide bond" description="Interchain (between B and A chains)" evidence="1">
    <location>
        <begin position="19"/>
        <end position="50"/>
    </location>
</feature>
<feature type="disulfide bond" evidence="1">
    <location>
        <begin position="36"/>
        <end position="41"/>
    </location>
</feature>
<feature type="non-consecutive residues" evidence="2">
    <location>
        <begin position="30"/>
        <end position="31"/>
    </location>
</feature>
<evidence type="ECO:0000250" key="1"/>
<evidence type="ECO:0000305" key="2"/>
<protein>
    <recommendedName>
        <fullName>Insulin</fullName>
    </recommendedName>
    <component>
        <recommendedName>
            <fullName>Insulin B chain</fullName>
        </recommendedName>
    </component>
    <component>
        <recommendedName>
            <fullName>Insulin A chain</fullName>
        </recommendedName>
    </component>
</protein>
<reference key="1">
    <citation type="journal article" date="1972" name="Hoppe-Seyler's Z. Physiol. Chem.">
        <title>Isolation and partial structural analysis of insulin from mouse (Mus musculus) and spiny mouse (Acomys cahirinus).</title>
        <authorList>
            <person name="Buenzli H.F."/>
            <person name="Humbel R.E."/>
        </authorList>
    </citation>
    <scope>PRELIMINARY PROTEIN SEQUENCE</scope>
</reference>
<name>INS_ACOCA</name>